<sequence length="97" mass="11233">MKKRGSRSLAQVIRCKTGKYFPASVESGTKKEKKHHYSTASKEKEVLRKRAAEFDVLVRSLLNKQMPKNPDQILVFTYQKGFVETDLHNFGRYSVKL</sequence>
<organism>
    <name type="scientific">Chlamydia muridarum (strain MoPn / Nigg)</name>
    <dbReference type="NCBI Taxonomy" id="243161"/>
    <lineage>
        <taxon>Bacteria</taxon>
        <taxon>Pseudomonadati</taxon>
        <taxon>Chlamydiota</taxon>
        <taxon>Chlamydiia</taxon>
        <taxon>Chlamydiales</taxon>
        <taxon>Chlamydiaceae</taxon>
        <taxon>Chlamydia/Chlamydophila group</taxon>
        <taxon>Chlamydia</taxon>
    </lineage>
</organism>
<accession>Q9PKV8</accession>
<reference key="1">
    <citation type="journal article" date="2000" name="Nucleic Acids Res.">
        <title>Genome sequences of Chlamydia trachomatis MoPn and Chlamydia pneumoniae AR39.</title>
        <authorList>
            <person name="Read T.D."/>
            <person name="Brunham R.C."/>
            <person name="Shen C."/>
            <person name="Gill S.R."/>
            <person name="Heidelberg J.F."/>
            <person name="White O."/>
            <person name="Hickey E.K."/>
            <person name="Peterson J.D."/>
            <person name="Utterback T.R."/>
            <person name="Berry K.J."/>
            <person name="Bass S."/>
            <person name="Linher K.D."/>
            <person name="Weidman J.F."/>
            <person name="Khouri H.M."/>
            <person name="Craven B."/>
            <person name="Bowman C."/>
            <person name="Dodson R.J."/>
            <person name="Gwinn M.L."/>
            <person name="Nelson W.C."/>
            <person name="DeBoy R.T."/>
            <person name="Kolonay J.F."/>
            <person name="McClarty G."/>
            <person name="Salzberg S.L."/>
            <person name="Eisen J.A."/>
            <person name="Fraser C.M."/>
        </authorList>
    </citation>
    <scope>NUCLEOTIDE SEQUENCE [LARGE SCALE GENOMIC DNA]</scope>
    <source>
        <strain>MoPn / Nigg</strain>
    </source>
</reference>
<gene>
    <name type="primary">ltuB</name>
    <name type="ordered locus">TC_0353</name>
</gene>
<protein>
    <recommendedName>
        <fullName>Late transcription unit B protein</fullName>
    </recommendedName>
</protein>
<feature type="chain" id="PRO_0000084519" description="Late transcription unit B protein">
    <location>
        <begin position="1"/>
        <end position="97"/>
    </location>
</feature>
<proteinExistence type="predicted"/>
<name>LTUB_CHLMU</name>
<dbReference type="EMBL" id="AE002160">
    <property type="protein sequence ID" value="AAF39214.1"/>
    <property type="molecule type" value="Genomic_DNA"/>
</dbReference>
<dbReference type="PIR" id="H81710">
    <property type="entry name" value="H81710"/>
</dbReference>
<dbReference type="RefSeq" id="WP_010230233.1">
    <property type="nucleotide sequence ID" value="NZ_CP063055.1"/>
</dbReference>
<dbReference type="GeneID" id="1245706"/>
<dbReference type="KEGG" id="cmu:TC_0353"/>
<dbReference type="HOGENOM" id="CLU_182837_0_0_0"/>
<dbReference type="OrthoDB" id="19032at2"/>
<dbReference type="Proteomes" id="UP000000800">
    <property type="component" value="Chromosome"/>
</dbReference>
<dbReference type="InterPro" id="IPR020502">
    <property type="entry name" value="LtuB"/>
</dbReference>
<dbReference type="Pfam" id="PF17455">
    <property type="entry name" value="LtuB"/>
    <property type="match status" value="1"/>
</dbReference>